<proteinExistence type="evidence at transcript level"/>
<protein>
    <recommendedName>
        <fullName>Gastricsin</fullName>
        <ecNumber>3.4.23.3</ecNumber>
    </recommendedName>
    <alternativeName>
        <fullName>Pepsinogen C</fullName>
    </alternativeName>
</protein>
<dbReference type="EC" id="3.4.23.3"/>
<dbReference type="EMBL" id="M88652">
    <property type="protein sequence ID" value="AAA37053.1"/>
    <property type="molecule type" value="mRNA"/>
</dbReference>
<dbReference type="PIR" id="B43356">
    <property type="entry name" value="B43356"/>
</dbReference>
<dbReference type="RefSeq" id="NP_001166470.1">
    <property type="nucleotide sequence ID" value="NM_001172999.1"/>
</dbReference>
<dbReference type="SMR" id="Q64411"/>
<dbReference type="FunCoup" id="Q64411">
    <property type="interactions" value="89"/>
</dbReference>
<dbReference type="STRING" id="10141.ENSCPOP00000006477"/>
<dbReference type="MEROPS" id="A01.003"/>
<dbReference type="Ensembl" id="ENSCPOT00000007255.3">
    <property type="protein sequence ID" value="ENSCPOP00000006477.2"/>
    <property type="gene ID" value="ENSCPOG00000007183.4"/>
</dbReference>
<dbReference type="GeneID" id="100135598"/>
<dbReference type="KEGG" id="cpoc:100135598"/>
<dbReference type="CTD" id="5225"/>
<dbReference type="VEuPathDB" id="HostDB:ENSCPOG00000007183"/>
<dbReference type="eggNOG" id="KOG1339">
    <property type="taxonomic scope" value="Eukaryota"/>
</dbReference>
<dbReference type="GeneTree" id="ENSGT00940000160626"/>
<dbReference type="HOGENOM" id="CLU_013253_3_0_1"/>
<dbReference type="InParanoid" id="Q64411"/>
<dbReference type="OMA" id="YSGEIYW"/>
<dbReference type="OrthoDB" id="771136at2759"/>
<dbReference type="TreeFam" id="TF314990"/>
<dbReference type="Proteomes" id="UP000005447">
    <property type="component" value="Unassembled WGS sequence"/>
</dbReference>
<dbReference type="Bgee" id="ENSCPOG00000007183">
    <property type="expression patterns" value="Expressed in cerebellum and 2 other cell types or tissues"/>
</dbReference>
<dbReference type="GO" id="GO:0005615">
    <property type="term" value="C:extracellular space"/>
    <property type="evidence" value="ECO:0007669"/>
    <property type="project" value="Ensembl"/>
</dbReference>
<dbReference type="GO" id="GO:0004190">
    <property type="term" value="F:aspartic-type endopeptidase activity"/>
    <property type="evidence" value="ECO:0007669"/>
    <property type="project" value="UniProtKB-KW"/>
</dbReference>
<dbReference type="GO" id="GO:0007586">
    <property type="term" value="P:digestion"/>
    <property type="evidence" value="ECO:0007669"/>
    <property type="project" value="UniProtKB-KW"/>
</dbReference>
<dbReference type="GO" id="GO:0002803">
    <property type="term" value="P:positive regulation of antibacterial peptide production"/>
    <property type="evidence" value="ECO:0007669"/>
    <property type="project" value="Ensembl"/>
</dbReference>
<dbReference type="GO" id="GO:0006508">
    <property type="term" value="P:proteolysis"/>
    <property type="evidence" value="ECO:0007669"/>
    <property type="project" value="UniProtKB-KW"/>
</dbReference>
<dbReference type="FunFam" id="2.40.70.10:FF:000006">
    <property type="entry name" value="Cathepsin E"/>
    <property type="match status" value="1"/>
</dbReference>
<dbReference type="FunFam" id="2.40.70.10:FF:000004">
    <property type="entry name" value="Pepsin A"/>
    <property type="match status" value="1"/>
</dbReference>
<dbReference type="Gene3D" id="6.10.140.60">
    <property type="match status" value="1"/>
</dbReference>
<dbReference type="Gene3D" id="2.40.70.10">
    <property type="entry name" value="Acid Proteases"/>
    <property type="match status" value="2"/>
</dbReference>
<dbReference type="InterPro" id="IPR001461">
    <property type="entry name" value="Aspartic_peptidase_A1"/>
</dbReference>
<dbReference type="InterPro" id="IPR001969">
    <property type="entry name" value="Aspartic_peptidase_AS"/>
</dbReference>
<dbReference type="InterPro" id="IPR012848">
    <property type="entry name" value="Aspartic_peptidase_N"/>
</dbReference>
<dbReference type="InterPro" id="IPR033121">
    <property type="entry name" value="PEPTIDASE_A1"/>
</dbReference>
<dbReference type="InterPro" id="IPR021109">
    <property type="entry name" value="Peptidase_aspartic_dom_sf"/>
</dbReference>
<dbReference type="PANTHER" id="PTHR47966">
    <property type="entry name" value="BETA-SITE APP-CLEAVING ENZYME, ISOFORM A-RELATED"/>
    <property type="match status" value="1"/>
</dbReference>
<dbReference type="PANTHER" id="PTHR47966:SF72">
    <property type="entry name" value="GASTRICSIN"/>
    <property type="match status" value="1"/>
</dbReference>
<dbReference type="Pfam" id="PF07966">
    <property type="entry name" value="A1_Propeptide"/>
    <property type="match status" value="1"/>
</dbReference>
<dbReference type="Pfam" id="PF00026">
    <property type="entry name" value="Asp"/>
    <property type="match status" value="1"/>
</dbReference>
<dbReference type="PRINTS" id="PR00792">
    <property type="entry name" value="PEPSIN"/>
</dbReference>
<dbReference type="SUPFAM" id="SSF50630">
    <property type="entry name" value="Acid proteases"/>
    <property type="match status" value="1"/>
</dbReference>
<dbReference type="PROSITE" id="PS00141">
    <property type="entry name" value="ASP_PROTEASE"/>
    <property type="match status" value="2"/>
</dbReference>
<dbReference type="PROSITE" id="PS51767">
    <property type="entry name" value="PEPTIDASE_A1"/>
    <property type="match status" value="1"/>
</dbReference>
<organism>
    <name type="scientific">Cavia porcellus</name>
    <name type="common">Guinea pig</name>
    <dbReference type="NCBI Taxonomy" id="10141"/>
    <lineage>
        <taxon>Eukaryota</taxon>
        <taxon>Metazoa</taxon>
        <taxon>Chordata</taxon>
        <taxon>Craniata</taxon>
        <taxon>Vertebrata</taxon>
        <taxon>Euteleostomi</taxon>
        <taxon>Mammalia</taxon>
        <taxon>Eutheria</taxon>
        <taxon>Euarchontoglires</taxon>
        <taxon>Glires</taxon>
        <taxon>Rodentia</taxon>
        <taxon>Hystricomorpha</taxon>
        <taxon>Caviidae</taxon>
        <taxon>Cavia</taxon>
    </lineage>
</organism>
<keyword id="KW-0064">Aspartyl protease</keyword>
<keyword id="KW-0222">Digestion</keyword>
<keyword id="KW-1015">Disulfide bond</keyword>
<keyword id="KW-0378">Hydrolase</keyword>
<keyword id="KW-0645">Protease</keyword>
<keyword id="KW-1185">Reference proteome</keyword>
<keyword id="KW-0964">Secreted</keyword>
<keyword id="KW-0732">Signal</keyword>
<keyword id="KW-0865">Zymogen</keyword>
<name>PEPC_CAVPO</name>
<comment type="function">
    <text>Hydrolyzes a variety of proteins.</text>
</comment>
<comment type="catalytic activity">
    <reaction>
        <text>More restricted specificity than pepsin A, but shows preferential cleavage at Tyr-|-Xaa bonds. High activity on hemoglobin.</text>
        <dbReference type="EC" id="3.4.23.3"/>
    </reaction>
</comment>
<comment type="subcellular location">
    <subcellularLocation>
        <location>Secreted</location>
    </subcellularLocation>
</comment>
<comment type="similarity">
    <text evidence="5">Belongs to the peptidase A1 family.</text>
</comment>
<reference key="1">
    <citation type="journal article" date="1992" name="J. Biol. Chem.">
        <title>Gastric procathepsin E and progastricsin from guinea pig. Purification, molecular cloning of cDNAs, and characterization of enzymatic properties, with special reference to procathepsin E.</title>
        <authorList>
            <person name="Kageyama T."/>
            <person name="Ichinose M."/>
            <person name="Tsukada S."/>
            <person name="Miki K."/>
            <person name="Kurokawa K."/>
            <person name="Koiwai O."/>
            <person name="Tanji M."/>
            <person name="Yakabe E."/>
            <person name="Athauda S.B."/>
            <person name="Takahashi K."/>
        </authorList>
    </citation>
    <scope>NUCLEOTIDE SEQUENCE [MRNA]</scope>
</reference>
<accession>Q64411</accession>
<gene>
    <name type="primary">PGC</name>
</gene>
<evidence type="ECO:0000250" key="1"/>
<evidence type="ECO:0000255" key="2"/>
<evidence type="ECO:0000255" key="3">
    <source>
        <dbReference type="PROSITE-ProRule" id="PRU01103"/>
    </source>
</evidence>
<evidence type="ECO:0000255" key="4">
    <source>
        <dbReference type="PROSITE-ProRule" id="PRU10094"/>
    </source>
</evidence>
<evidence type="ECO:0000305" key="5"/>
<sequence>MKWMVVVLLCLPLLEATQIKVPLKKIKSIREVLREKGLLGDFLKNHKPQHARKFFRNRLAKTGDFSVLYEPMSYMDAAYFGQISLGTPPQSFQVLFDTGSSNLWVPSVYCSSLACTTHTRFNPRDSSTYVATDQSFSLEYGTGSLTGVFGYDTMTIQDIQVPKQEFGLSETEPGSDFVYAEFDGILGLGYPGLSEGGATTAMQGLLREGALSQSLFSVYLGSQQGSDEGQLILGGVDESLYTGDIYWTPVTQELYWQIGIEGFLIDGSASGWCSRGCQGIVDTGTSLLTVPSDYLSTLVQAIGAEENEYGEYFVSCSSIQDLPTLTFVISGVEFPLSPSAYILSGENYCMVGLESTYVSPGGGEPVWILGDVFLRSYYSVYDLANNRVGFATAA</sequence>
<feature type="signal peptide" evidence="2">
    <location>
        <begin position="1"/>
        <end position="16"/>
    </location>
</feature>
<feature type="propeptide" id="PRO_0000026054" description="Activation peptide">
    <location>
        <begin position="17"/>
        <end position="65"/>
    </location>
</feature>
<feature type="chain" id="PRO_0000026055" description="Gastricsin">
    <location>
        <begin position="66"/>
        <end position="394"/>
    </location>
</feature>
<feature type="domain" description="Peptidase A1" evidence="3">
    <location>
        <begin position="79"/>
        <end position="391"/>
    </location>
</feature>
<feature type="active site" evidence="4">
    <location>
        <position position="97"/>
    </location>
</feature>
<feature type="active site" evidence="4">
    <location>
        <position position="283"/>
    </location>
</feature>
<feature type="disulfide bond" evidence="1">
    <location>
        <begin position="110"/>
        <end position="115"/>
    </location>
</feature>
<feature type="disulfide bond" evidence="1">
    <location>
        <begin position="273"/>
        <end position="277"/>
    </location>
</feature>
<feature type="disulfide bond" evidence="1">
    <location>
        <begin position="316"/>
        <end position="349"/>
    </location>
</feature>